<sequence length="877" mass="98347">MTTESMPESTNDYQPQSIEAAIQHVWDEQQVFVAKEDDSKEKFYCLSMFPYPSGKLHMGHVRNYTIGDVVSRFQRMQGKNVLQPMGWDAFGLPAENAAMDNQVAPAKWTYQNIDYMRNQLKRLGLGYDWTREVATCHPEYYRWEQWLFTRLMEKGLVYRKLSVVNWDPVDQTVLANEQVIDGKGWRSGVPVERKEIAQWFLRITDYAEELLTDLDQLEGWPEQVKTMQKNWIGKSTGLEIEFPIASGLDESNGSLKVYTTRPDTLMGVTYVAVAADHPWARKASVNNEPLERFIEECSHISTAEADMETMEKKGVDTGIRVKHPITGDEVPVWAANFVLMGYGTGAVMSVPAHDQRDYEFAKAYDLPIKAVIAPKAGEEADVSEAAFTEKGVLVNSGQFDGLKSKQALHEMAKVLGELGLGEKQTNYRLRDWGISRQRYWGCPIPVIYCPACGALPVPEKDLPVRLPEDVVPDGSGSPLAKLDSFKKCECPQCGGPANRETDTFDTFFESSWYHARYTSRHEDNAMLDKAAADHWLPVDQYIGGIEHAILHLLYARFFHKLMRDEGLVSSDEPFKNLLTQGMVLAGSWFTQDEKGKQTWYSPLDVDPVTDDKGAIVKGTLKSDGTEVQYGGIIKMSKSKNNGIDPQTLIDQYGADTLRLYIMFASPPEQTLEWSDSAVEGAHRFLNRVWRQVQTHVSTGVVAACTSNDDLTKEQKALRLKLHTTLQKVTDDMGRRMHFNTAIAATMELLNDISRFKDESDAGRSVMQEALEMLVLMLSPMTPHASQALWEALGHDGLVLNVTWPTVDDAALVKDEIEIMVQVNGKLRGKIEVAAEADKDTILAAAKANEQAAKFIDGKDIVKEIVVPGRLVNIVVKG</sequence>
<dbReference type="EC" id="6.1.1.4" evidence="1"/>
<dbReference type="EMBL" id="CP000109">
    <property type="protein sequence ID" value="ABB41075.1"/>
    <property type="molecule type" value="Genomic_DNA"/>
</dbReference>
<dbReference type="SMR" id="Q31IE8"/>
<dbReference type="STRING" id="317025.Tcr_0479"/>
<dbReference type="KEGG" id="tcx:Tcr_0479"/>
<dbReference type="eggNOG" id="COG0495">
    <property type="taxonomic scope" value="Bacteria"/>
</dbReference>
<dbReference type="HOGENOM" id="CLU_004427_0_0_6"/>
<dbReference type="OrthoDB" id="9810365at2"/>
<dbReference type="GO" id="GO:0005829">
    <property type="term" value="C:cytosol"/>
    <property type="evidence" value="ECO:0007669"/>
    <property type="project" value="TreeGrafter"/>
</dbReference>
<dbReference type="GO" id="GO:0002161">
    <property type="term" value="F:aminoacyl-tRNA deacylase activity"/>
    <property type="evidence" value="ECO:0007669"/>
    <property type="project" value="InterPro"/>
</dbReference>
<dbReference type="GO" id="GO:0005524">
    <property type="term" value="F:ATP binding"/>
    <property type="evidence" value="ECO:0007669"/>
    <property type="project" value="UniProtKB-UniRule"/>
</dbReference>
<dbReference type="GO" id="GO:0004823">
    <property type="term" value="F:leucine-tRNA ligase activity"/>
    <property type="evidence" value="ECO:0007669"/>
    <property type="project" value="UniProtKB-UniRule"/>
</dbReference>
<dbReference type="GO" id="GO:0006429">
    <property type="term" value="P:leucyl-tRNA aminoacylation"/>
    <property type="evidence" value="ECO:0007669"/>
    <property type="project" value="UniProtKB-UniRule"/>
</dbReference>
<dbReference type="CDD" id="cd07958">
    <property type="entry name" value="Anticodon_Ia_Leu_BEm"/>
    <property type="match status" value="1"/>
</dbReference>
<dbReference type="CDD" id="cd00812">
    <property type="entry name" value="LeuRS_core"/>
    <property type="match status" value="1"/>
</dbReference>
<dbReference type="FunFam" id="2.20.28.290:FF:000001">
    <property type="entry name" value="Leucine--tRNA ligase"/>
    <property type="match status" value="1"/>
</dbReference>
<dbReference type="FunFam" id="3.10.20.590:FF:000001">
    <property type="entry name" value="Leucine--tRNA ligase"/>
    <property type="match status" value="1"/>
</dbReference>
<dbReference type="FunFam" id="3.40.50.620:FF:000003">
    <property type="entry name" value="Leucine--tRNA ligase"/>
    <property type="match status" value="1"/>
</dbReference>
<dbReference type="FunFam" id="3.40.50.620:FF:000124">
    <property type="entry name" value="Leucine--tRNA ligase"/>
    <property type="match status" value="1"/>
</dbReference>
<dbReference type="FunFam" id="3.90.740.10:FF:000012">
    <property type="entry name" value="Leucine--tRNA ligase"/>
    <property type="match status" value="1"/>
</dbReference>
<dbReference type="FunFam" id="1.10.730.10:FF:000011">
    <property type="entry name" value="Leucine--tRNA ligase chloroplastic/mitochondrial"/>
    <property type="match status" value="1"/>
</dbReference>
<dbReference type="Gene3D" id="2.20.28.290">
    <property type="match status" value="1"/>
</dbReference>
<dbReference type="Gene3D" id="3.10.20.590">
    <property type="match status" value="1"/>
</dbReference>
<dbReference type="Gene3D" id="3.40.50.620">
    <property type="entry name" value="HUPs"/>
    <property type="match status" value="2"/>
</dbReference>
<dbReference type="Gene3D" id="1.10.730.10">
    <property type="entry name" value="Isoleucyl-tRNA Synthetase, Domain 1"/>
    <property type="match status" value="2"/>
</dbReference>
<dbReference type="Gene3D" id="3.90.740.10">
    <property type="entry name" value="Valyl/Leucyl/Isoleucyl-tRNA synthetase, editing domain"/>
    <property type="match status" value="1"/>
</dbReference>
<dbReference type="HAMAP" id="MF_00049_B">
    <property type="entry name" value="Leu_tRNA_synth_B"/>
    <property type="match status" value="1"/>
</dbReference>
<dbReference type="InterPro" id="IPR001412">
    <property type="entry name" value="aa-tRNA-synth_I_CS"/>
</dbReference>
<dbReference type="InterPro" id="IPR002300">
    <property type="entry name" value="aa-tRNA-synth_Ia"/>
</dbReference>
<dbReference type="InterPro" id="IPR002302">
    <property type="entry name" value="Leu-tRNA-ligase"/>
</dbReference>
<dbReference type="InterPro" id="IPR025709">
    <property type="entry name" value="Leu_tRNA-synth_edit"/>
</dbReference>
<dbReference type="InterPro" id="IPR013155">
    <property type="entry name" value="M/V/L/I-tRNA-synth_anticd-bd"/>
</dbReference>
<dbReference type="InterPro" id="IPR015413">
    <property type="entry name" value="Methionyl/Leucyl_tRNA_Synth"/>
</dbReference>
<dbReference type="InterPro" id="IPR014729">
    <property type="entry name" value="Rossmann-like_a/b/a_fold"/>
</dbReference>
<dbReference type="InterPro" id="IPR009080">
    <property type="entry name" value="tRNAsynth_Ia_anticodon-bd"/>
</dbReference>
<dbReference type="InterPro" id="IPR009008">
    <property type="entry name" value="Val/Leu/Ile-tRNA-synth_edit"/>
</dbReference>
<dbReference type="NCBIfam" id="TIGR00396">
    <property type="entry name" value="leuS_bact"/>
    <property type="match status" value="1"/>
</dbReference>
<dbReference type="PANTHER" id="PTHR43740:SF2">
    <property type="entry name" value="LEUCINE--TRNA LIGASE, MITOCHONDRIAL"/>
    <property type="match status" value="1"/>
</dbReference>
<dbReference type="PANTHER" id="PTHR43740">
    <property type="entry name" value="LEUCYL-TRNA SYNTHETASE"/>
    <property type="match status" value="1"/>
</dbReference>
<dbReference type="Pfam" id="PF08264">
    <property type="entry name" value="Anticodon_1"/>
    <property type="match status" value="1"/>
</dbReference>
<dbReference type="Pfam" id="PF00133">
    <property type="entry name" value="tRNA-synt_1"/>
    <property type="match status" value="2"/>
</dbReference>
<dbReference type="Pfam" id="PF13603">
    <property type="entry name" value="tRNA-synt_1_2"/>
    <property type="match status" value="1"/>
</dbReference>
<dbReference type="Pfam" id="PF09334">
    <property type="entry name" value="tRNA-synt_1g"/>
    <property type="match status" value="1"/>
</dbReference>
<dbReference type="PRINTS" id="PR00985">
    <property type="entry name" value="TRNASYNTHLEU"/>
</dbReference>
<dbReference type="SUPFAM" id="SSF47323">
    <property type="entry name" value="Anticodon-binding domain of a subclass of class I aminoacyl-tRNA synthetases"/>
    <property type="match status" value="1"/>
</dbReference>
<dbReference type="SUPFAM" id="SSF52374">
    <property type="entry name" value="Nucleotidylyl transferase"/>
    <property type="match status" value="1"/>
</dbReference>
<dbReference type="SUPFAM" id="SSF50677">
    <property type="entry name" value="ValRS/IleRS/LeuRS editing domain"/>
    <property type="match status" value="1"/>
</dbReference>
<dbReference type="PROSITE" id="PS00178">
    <property type="entry name" value="AA_TRNA_LIGASE_I"/>
    <property type="match status" value="1"/>
</dbReference>
<proteinExistence type="inferred from homology"/>
<keyword id="KW-0030">Aminoacyl-tRNA synthetase</keyword>
<keyword id="KW-0067">ATP-binding</keyword>
<keyword id="KW-0963">Cytoplasm</keyword>
<keyword id="KW-0436">Ligase</keyword>
<keyword id="KW-0547">Nucleotide-binding</keyword>
<keyword id="KW-0648">Protein biosynthesis</keyword>
<accession>Q31IE8</accession>
<protein>
    <recommendedName>
        <fullName evidence="1">Leucine--tRNA ligase</fullName>
        <ecNumber evidence="1">6.1.1.4</ecNumber>
    </recommendedName>
    <alternativeName>
        <fullName evidence="1">Leucyl-tRNA synthetase</fullName>
        <shortName evidence="1">LeuRS</shortName>
    </alternativeName>
</protein>
<organism>
    <name type="scientific">Hydrogenovibrio crunogenus (strain DSM 25203 / XCL-2)</name>
    <name type="common">Thiomicrospira crunogena</name>
    <dbReference type="NCBI Taxonomy" id="317025"/>
    <lineage>
        <taxon>Bacteria</taxon>
        <taxon>Pseudomonadati</taxon>
        <taxon>Pseudomonadota</taxon>
        <taxon>Gammaproteobacteria</taxon>
        <taxon>Thiotrichales</taxon>
        <taxon>Piscirickettsiaceae</taxon>
        <taxon>Hydrogenovibrio</taxon>
    </lineage>
</organism>
<gene>
    <name evidence="1" type="primary">leuS</name>
    <name type="ordered locus">Tcr_0479</name>
</gene>
<comment type="catalytic activity">
    <reaction evidence="1">
        <text>tRNA(Leu) + L-leucine + ATP = L-leucyl-tRNA(Leu) + AMP + diphosphate</text>
        <dbReference type="Rhea" id="RHEA:11688"/>
        <dbReference type="Rhea" id="RHEA-COMP:9613"/>
        <dbReference type="Rhea" id="RHEA-COMP:9622"/>
        <dbReference type="ChEBI" id="CHEBI:30616"/>
        <dbReference type="ChEBI" id="CHEBI:33019"/>
        <dbReference type="ChEBI" id="CHEBI:57427"/>
        <dbReference type="ChEBI" id="CHEBI:78442"/>
        <dbReference type="ChEBI" id="CHEBI:78494"/>
        <dbReference type="ChEBI" id="CHEBI:456215"/>
        <dbReference type="EC" id="6.1.1.4"/>
    </reaction>
</comment>
<comment type="subcellular location">
    <subcellularLocation>
        <location evidence="1">Cytoplasm</location>
    </subcellularLocation>
</comment>
<comment type="similarity">
    <text evidence="1">Belongs to the class-I aminoacyl-tRNA synthetase family.</text>
</comment>
<evidence type="ECO:0000255" key="1">
    <source>
        <dbReference type="HAMAP-Rule" id="MF_00049"/>
    </source>
</evidence>
<name>SYL_HYDCU</name>
<feature type="chain" id="PRO_0000334835" description="Leucine--tRNA ligase">
    <location>
        <begin position="1"/>
        <end position="877"/>
    </location>
</feature>
<feature type="short sequence motif" description="'HIGH' region">
    <location>
        <begin position="50"/>
        <end position="60"/>
    </location>
</feature>
<feature type="short sequence motif" description="'KMSKS' region">
    <location>
        <begin position="634"/>
        <end position="638"/>
    </location>
</feature>
<feature type="binding site" evidence="1">
    <location>
        <position position="637"/>
    </location>
    <ligand>
        <name>ATP</name>
        <dbReference type="ChEBI" id="CHEBI:30616"/>
    </ligand>
</feature>
<reference key="1">
    <citation type="journal article" date="2006" name="PLoS Biol.">
        <title>The genome of deep-sea vent chemolithoautotroph Thiomicrospira crunogena XCL-2.</title>
        <authorList>
            <person name="Scott K.M."/>
            <person name="Sievert S.M."/>
            <person name="Abril F.N."/>
            <person name="Ball L.A."/>
            <person name="Barrett C.J."/>
            <person name="Blake R.A."/>
            <person name="Boller A.J."/>
            <person name="Chain P.S.G."/>
            <person name="Clark J.A."/>
            <person name="Davis C.R."/>
            <person name="Detter C."/>
            <person name="Do K.F."/>
            <person name="Dobrinski K.P."/>
            <person name="Faza B.I."/>
            <person name="Fitzpatrick K.A."/>
            <person name="Freyermuth S.K."/>
            <person name="Harmer T.L."/>
            <person name="Hauser L.J."/>
            <person name="Huegler M."/>
            <person name="Kerfeld C.A."/>
            <person name="Klotz M.G."/>
            <person name="Kong W.W."/>
            <person name="Land M."/>
            <person name="Lapidus A."/>
            <person name="Larimer F.W."/>
            <person name="Longo D.L."/>
            <person name="Lucas S."/>
            <person name="Malfatti S.A."/>
            <person name="Massey S.E."/>
            <person name="Martin D.D."/>
            <person name="McCuddin Z."/>
            <person name="Meyer F."/>
            <person name="Moore J.L."/>
            <person name="Ocampo L.H. Jr."/>
            <person name="Paul J.H."/>
            <person name="Paulsen I.T."/>
            <person name="Reep D.K."/>
            <person name="Ren Q."/>
            <person name="Ross R.L."/>
            <person name="Sato P.Y."/>
            <person name="Thomas P."/>
            <person name="Tinkham L.E."/>
            <person name="Zeruth G.T."/>
        </authorList>
    </citation>
    <scope>NUCLEOTIDE SEQUENCE [LARGE SCALE GENOMIC DNA]</scope>
    <source>
        <strain>DSM 25203 / XCL-2</strain>
    </source>
</reference>